<reference key="1">
    <citation type="journal article" date="2002" name="Nature">
        <title>The genome sequence of Schizosaccharomyces pombe.</title>
        <authorList>
            <person name="Wood V."/>
            <person name="Gwilliam R."/>
            <person name="Rajandream M.A."/>
            <person name="Lyne M.H."/>
            <person name="Lyne R."/>
            <person name="Stewart A."/>
            <person name="Sgouros J.G."/>
            <person name="Peat N."/>
            <person name="Hayles J."/>
            <person name="Baker S.G."/>
            <person name="Basham D."/>
            <person name="Bowman S."/>
            <person name="Brooks K."/>
            <person name="Brown D."/>
            <person name="Brown S."/>
            <person name="Chillingworth T."/>
            <person name="Churcher C.M."/>
            <person name="Collins M."/>
            <person name="Connor R."/>
            <person name="Cronin A."/>
            <person name="Davis P."/>
            <person name="Feltwell T."/>
            <person name="Fraser A."/>
            <person name="Gentles S."/>
            <person name="Goble A."/>
            <person name="Hamlin N."/>
            <person name="Harris D.E."/>
            <person name="Hidalgo J."/>
            <person name="Hodgson G."/>
            <person name="Holroyd S."/>
            <person name="Hornsby T."/>
            <person name="Howarth S."/>
            <person name="Huckle E.J."/>
            <person name="Hunt S."/>
            <person name="Jagels K."/>
            <person name="James K.D."/>
            <person name="Jones L."/>
            <person name="Jones M."/>
            <person name="Leather S."/>
            <person name="McDonald S."/>
            <person name="McLean J."/>
            <person name="Mooney P."/>
            <person name="Moule S."/>
            <person name="Mungall K.L."/>
            <person name="Murphy L.D."/>
            <person name="Niblett D."/>
            <person name="Odell C."/>
            <person name="Oliver K."/>
            <person name="O'Neil S."/>
            <person name="Pearson D."/>
            <person name="Quail M.A."/>
            <person name="Rabbinowitsch E."/>
            <person name="Rutherford K.M."/>
            <person name="Rutter S."/>
            <person name="Saunders D."/>
            <person name="Seeger K."/>
            <person name="Sharp S."/>
            <person name="Skelton J."/>
            <person name="Simmonds M.N."/>
            <person name="Squares R."/>
            <person name="Squares S."/>
            <person name="Stevens K."/>
            <person name="Taylor K."/>
            <person name="Taylor R.G."/>
            <person name="Tivey A."/>
            <person name="Walsh S.V."/>
            <person name="Warren T."/>
            <person name="Whitehead S."/>
            <person name="Woodward J.R."/>
            <person name="Volckaert G."/>
            <person name="Aert R."/>
            <person name="Robben J."/>
            <person name="Grymonprez B."/>
            <person name="Weltjens I."/>
            <person name="Vanstreels E."/>
            <person name="Rieger M."/>
            <person name="Schaefer M."/>
            <person name="Mueller-Auer S."/>
            <person name="Gabel C."/>
            <person name="Fuchs M."/>
            <person name="Duesterhoeft A."/>
            <person name="Fritzc C."/>
            <person name="Holzer E."/>
            <person name="Moestl D."/>
            <person name="Hilbert H."/>
            <person name="Borzym K."/>
            <person name="Langer I."/>
            <person name="Beck A."/>
            <person name="Lehrach H."/>
            <person name="Reinhardt R."/>
            <person name="Pohl T.M."/>
            <person name="Eger P."/>
            <person name="Zimmermann W."/>
            <person name="Wedler H."/>
            <person name="Wambutt R."/>
            <person name="Purnelle B."/>
            <person name="Goffeau A."/>
            <person name="Cadieu E."/>
            <person name="Dreano S."/>
            <person name="Gloux S."/>
            <person name="Lelaure V."/>
            <person name="Mottier S."/>
            <person name="Galibert F."/>
            <person name="Aves S.J."/>
            <person name="Xiang Z."/>
            <person name="Hunt C."/>
            <person name="Moore K."/>
            <person name="Hurst S.M."/>
            <person name="Lucas M."/>
            <person name="Rochet M."/>
            <person name="Gaillardin C."/>
            <person name="Tallada V.A."/>
            <person name="Garzon A."/>
            <person name="Thode G."/>
            <person name="Daga R.R."/>
            <person name="Cruzado L."/>
            <person name="Jimenez J."/>
            <person name="Sanchez M."/>
            <person name="del Rey F."/>
            <person name="Benito J."/>
            <person name="Dominguez A."/>
            <person name="Revuelta J.L."/>
            <person name="Moreno S."/>
            <person name="Armstrong J."/>
            <person name="Forsburg S.L."/>
            <person name="Cerutti L."/>
            <person name="Lowe T."/>
            <person name="McCombie W.R."/>
            <person name="Paulsen I."/>
            <person name="Potashkin J."/>
            <person name="Shpakovski G.V."/>
            <person name="Ussery D."/>
            <person name="Barrell B.G."/>
            <person name="Nurse P."/>
        </authorList>
    </citation>
    <scope>NUCLEOTIDE SEQUENCE [LARGE SCALE GENOMIC DNA]</scope>
    <source>
        <strain>972 / ATCC 24843</strain>
    </source>
</reference>
<reference key="2">
    <citation type="journal article" date="2006" name="Nat. Biotechnol.">
        <title>ORFeome cloning and global analysis of protein localization in the fission yeast Schizosaccharomyces pombe.</title>
        <authorList>
            <person name="Matsuyama A."/>
            <person name="Arai R."/>
            <person name="Yashiroda Y."/>
            <person name="Shirai A."/>
            <person name="Kamata A."/>
            <person name="Sekido S."/>
            <person name="Kobayashi Y."/>
            <person name="Hashimoto A."/>
            <person name="Hamamoto M."/>
            <person name="Hiraoka Y."/>
            <person name="Horinouchi S."/>
            <person name="Yoshida M."/>
        </authorList>
    </citation>
    <scope>SUBCELLULAR LOCATION [LARGE SCALE ANALYSIS]</scope>
</reference>
<dbReference type="EC" id="2.1.1.386"/>
<dbReference type="EMBL" id="CU329671">
    <property type="protein sequence ID" value="CAB58157.1"/>
    <property type="molecule type" value="Genomic_DNA"/>
</dbReference>
<dbReference type="PIR" id="T40243">
    <property type="entry name" value="T40243"/>
</dbReference>
<dbReference type="SMR" id="Q9UST9"/>
<dbReference type="BioGRID" id="276783">
    <property type="interactions" value="25"/>
</dbReference>
<dbReference type="FunCoup" id="Q9UST9">
    <property type="interactions" value="217"/>
</dbReference>
<dbReference type="STRING" id="284812.Q9UST9"/>
<dbReference type="PaxDb" id="4896-SPBC336.05c.1"/>
<dbReference type="EnsemblFungi" id="SPBC336.05c.1">
    <property type="protein sequence ID" value="SPBC336.05c.1:pep"/>
    <property type="gene ID" value="SPBC336.05c"/>
</dbReference>
<dbReference type="KEGG" id="spo:2540251"/>
<dbReference type="PomBase" id="SPBC336.05c"/>
<dbReference type="VEuPathDB" id="FungiDB:SPBC336.05c"/>
<dbReference type="eggNOG" id="KOG1045">
    <property type="taxonomic scope" value="Eukaryota"/>
</dbReference>
<dbReference type="HOGENOM" id="CLU_738011_0_0_1"/>
<dbReference type="InParanoid" id="Q9UST9"/>
<dbReference type="OMA" id="VFERICS"/>
<dbReference type="PhylomeDB" id="Q9UST9"/>
<dbReference type="PRO" id="PR:Q9UST9"/>
<dbReference type="Proteomes" id="UP000002485">
    <property type="component" value="Chromosome II"/>
</dbReference>
<dbReference type="GO" id="GO:0005737">
    <property type="term" value="C:cytoplasm"/>
    <property type="evidence" value="ECO:0000318"/>
    <property type="project" value="GO_Central"/>
</dbReference>
<dbReference type="GO" id="GO:0005829">
    <property type="term" value="C:cytosol"/>
    <property type="evidence" value="ECO:0007005"/>
    <property type="project" value="PomBase"/>
</dbReference>
<dbReference type="GO" id="GO:0005634">
    <property type="term" value="C:nucleus"/>
    <property type="evidence" value="ECO:0000318"/>
    <property type="project" value="GO_Central"/>
</dbReference>
<dbReference type="GO" id="GO:0046872">
    <property type="term" value="F:metal ion binding"/>
    <property type="evidence" value="ECO:0007669"/>
    <property type="project" value="UniProtKB-KW"/>
</dbReference>
<dbReference type="GO" id="GO:0008171">
    <property type="term" value="F:O-methyltransferase activity"/>
    <property type="evidence" value="ECO:0000318"/>
    <property type="project" value="GO_Central"/>
</dbReference>
<dbReference type="GO" id="GO:0003723">
    <property type="term" value="F:RNA binding"/>
    <property type="evidence" value="ECO:0007669"/>
    <property type="project" value="UniProtKB-KW"/>
</dbReference>
<dbReference type="GO" id="GO:0008173">
    <property type="term" value="F:RNA methyltransferase activity"/>
    <property type="evidence" value="ECO:0000318"/>
    <property type="project" value="GO_Central"/>
</dbReference>
<dbReference type="GO" id="GO:0090486">
    <property type="term" value="F:small RNA 2'-O-methyltransferase activity"/>
    <property type="evidence" value="ECO:0000266"/>
    <property type="project" value="PomBase"/>
</dbReference>
<dbReference type="GO" id="GO:0031048">
    <property type="term" value="P:regulatory ncRNA-mediated heterochromatin formation"/>
    <property type="evidence" value="ECO:0000266"/>
    <property type="project" value="PomBase"/>
</dbReference>
<dbReference type="GO" id="GO:0001510">
    <property type="term" value="P:RNA methylation"/>
    <property type="evidence" value="ECO:0007669"/>
    <property type="project" value="InterPro"/>
</dbReference>
<dbReference type="GO" id="GO:0030422">
    <property type="term" value="P:siRNA processing"/>
    <property type="evidence" value="ECO:0000318"/>
    <property type="project" value="GO_Central"/>
</dbReference>
<dbReference type="CDD" id="cd02440">
    <property type="entry name" value="AdoMet_MTases"/>
    <property type="match status" value="1"/>
</dbReference>
<dbReference type="FunFam" id="3.40.50.150:FF:000743">
    <property type="entry name" value="Protein with similarity to HEN1 (Arabidopsis thaliana)"/>
    <property type="match status" value="1"/>
</dbReference>
<dbReference type="Gene3D" id="3.40.50.150">
    <property type="entry name" value="Vaccinia Virus protein VP39"/>
    <property type="match status" value="1"/>
</dbReference>
<dbReference type="InterPro" id="IPR026610">
    <property type="entry name" value="Hen1"/>
</dbReference>
<dbReference type="InterPro" id="IPR013217">
    <property type="entry name" value="Methyltransf_12"/>
</dbReference>
<dbReference type="InterPro" id="IPR029063">
    <property type="entry name" value="SAM-dependent_MTases_sf"/>
</dbReference>
<dbReference type="PANTHER" id="PTHR21404">
    <property type="entry name" value="HEN1"/>
    <property type="match status" value="1"/>
</dbReference>
<dbReference type="PANTHER" id="PTHR21404:SF3">
    <property type="entry name" value="SMALL RNA 2'-O-METHYLTRANSFERASE"/>
    <property type="match status" value="1"/>
</dbReference>
<dbReference type="Pfam" id="PF08242">
    <property type="entry name" value="Methyltransf_12"/>
    <property type="match status" value="1"/>
</dbReference>
<dbReference type="SUPFAM" id="SSF53335">
    <property type="entry name" value="S-adenosyl-L-methionine-dependent methyltransferases"/>
    <property type="match status" value="1"/>
</dbReference>
<comment type="function">
    <text evidence="1">Methyltransferase that adds a 2'-O-methyl group at the 3'-end of small RNAs.</text>
</comment>
<comment type="catalytic activity">
    <reaction>
        <text>small RNA 3'-end nucleotide + S-adenosyl-L-methionine = small RNA 3'-end 2'-O-methylnucleotide + S-adenosyl-L-homocysteine + H(+)</text>
        <dbReference type="Rhea" id="RHEA:37887"/>
        <dbReference type="Rhea" id="RHEA-COMP:10415"/>
        <dbReference type="Rhea" id="RHEA-COMP:10416"/>
        <dbReference type="ChEBI" id="CHEBI:15378"/>
        <dbReference type="ChEBI" id="CHEBI:57856"/>
        <dbReference type="ChEBI" id="CHEBI:59789"/>
        <dbReference type="ChEBI" id="CHEBI:74896"/>
        <dbReference type="ChEBI" id="CHEBI:74898"/>
        <dbReference type="EC" id="2.1.1.386"/>
    </reaction>
</comment>
<comment type="cofactor">
    <cofactor evidence="1">
        <name>Mg(2+)</name>
        <dbReference type="ChEBI" id="CHEBI:18420"/>
    </cofactor>
    <text evidence="1">Binds 1 Mg(2+) ion per subunit.</text>
</comment>
<comment type="subcellular location">
    <subcellularLocation>
        <location evidence="2">Cytoplasm</location>
    </subcellularLocation>
</comment>
<comment type="similarity">
    <text evidence="3">Belongs to the methyltransferase superfamily. HEN1 family.</text>
</comment>
<feature type="chain" id="PRO_0000343141" description="Small RNA 2'-O-methyltransferase">
    <location>
        <begin position="1"/>
        <end position="378"/>
    </location>
</feature>
<feature type="binding site" evidence="1">
    <location>
        <position position="61"/>
    </location>
    <ligand>
        <name>S-adenosyl-L-methionine</name>
        <dbReference type="ChEBI" id="CHEBI:59789"/>
    </ligand>
</feature>
<feature type="binding site" evidence="1">
    <location>
        <position position="114"/>
    </location>
    <ligand>
        <name>Mg(2+)</name>
        <dbReference type="ChEBI" id="CHEBI:18420"/>
    </ligand>
</feature>
<feature type="binding site" evidence="1">
    <location>
        <position position="117"/>
    </location>
    <ligand>
        <name>Mg(2+)</name>
        <dbReference type="ChEBI" id="CHEBI:18420"/>
    </ligand>
</feature>
<feature type="binding site" evidence="1">
    <location>
        <position position="118"/>
    </location>
    <ligand>
        <name>Mg(2+)</name>
        <dbReference type="ChEBI" id="CHEBI:18420"/>
    </ligand>
</feature>
<feature type="binding site" evidence="1">
    <location>
        <position position="176"/>
    </location>
    <ligand>
        <name>Mg(2+)</name>
        <dbReference type="ChEBI" id="CHEBI:18420"/>
    </ligand>
</feature>
<organism>
    <name type="scientific">Schizosaccharomyces pombe (strain 972 / ATCC 24843)</name>
    <name type="common">Fission yeast</name>
    <dbReference type="NCBI Taxonomy" id="284812"/>
    <lineage>
        <taxon>Eukaryota</taxon>
        <taxon>Fungi</taxon>
        <taxon>Dikarya</taxon>
        <taxon>Ascomycota</taxon>
        <taxon>Taphrinomycotina</taxon>
        <taxon>Schizosaccharomycetes</taxon>
        <taxon>Schizosaccharomycetales</taxon>
        <taxon>Schizosaccharomycetaceae</taxon>
        <taxon>Schizosaccharomyces</taxon>
    </lineage>
</organism>
<gene>
    <name type="ORF">SPBC336.05c</name>
</gene>
<protein>
    <recommendedName>
        <fullName>Small RNA 2'-O-methyltransferase</fullName>
        <ecNumber>2.1.1.386</ecNumber>
    </recommendedName>
    <alternativeName>
        <fullName>HEN1 methyltransferase homolog</fullName>
    </alternativeName>
</protein>
<name>HENMT_SCHPO</name>
<accession>Q9UST9</accession>
<evidence type="ECO:0000250" key="1"/>
<evidence type="ECO:0000269" key="2">
    <source>
    </source>
</evidence>
<evidence type="ECO:0000305" key="3"/>
<sequence>MGVSSFYPPLHVQRRRKLFKILQGGFPVRSLLDIGCGDARFLSYLVPCNDQVPIEFLAGIDINEQSIERATEALQVRTEDFLQLRWRPLHIELLLGNIKDFTHYKHVDAVVASEFIEHCQVAEILAFEKLVFGNLKPNVCVVSTPNFEFNTIFEKLSTLTSSISSRTSTNFRHPEHVFEWDRKEFAKWAYKICKRYPEYTVEFTGCGLLNDLIDGDDLLHFRPSSTYGFCTQIAVFHQSKNNAASHCFLKDQNSSILLYKKITYPFMEQLFPPTVQQFMNLLKKAFFDHLFGRHCLLLFQVIAGKCALSVKLPFLFIWESSPLIRHAFHYDDSIYLSYCPELKKSKHKGIALANSFSFRIAKVLKKSRIFIITFHHYV</sequence>
<keyword id="KW-0963">Cytoplasm</keyword>
<keyword id="KW-0460">Magnesium</keyword>
<keyword id="KW-0479">Metal-binding</keyword>
<keyword id="KW-0489">Methyltransferase</keyword>
<keyword id="KW-1185">Reference proteome</keyword>
<keyword id="KW-0694">RNA-binding</keyword>
<keyword id="KW-0943">RNA-mediated gene silencing</keyword>
<keyword id="KW-0949">S-adenosyl-L-methionine</keyword>
<keyword id="KW-0808">Transferase</keyword>
<proteinExistence type="inferred from homology"/>